<accession>Q84F70</accession>
<feature type="chain" id="PRO_0000078179" description="Serralysin">
    <location>
        <begin position="1"/>
        <end position="486"/>
    </location>
</feature>
<feature type="repeat" description="Hemolysin-type calcium-binding 1">
    <location>
        <begin position="345"/>
        <end position="362"/>
    </location>
</feature>
<feature type="repeat" description="Hemolysin-type calcium-binding 2">
    <location>
        <begin position="363"/>
        <end position="380"/>
    </location>
</feature>
<feature type="active site" evidence="2">
    <location>
        <position position="188"/>
    </location>
</feature>
<feature type="binding site" evidence="2">
    <location>
        <position position="187"/>
    </location>
    <ligand>
        <name>Zn(2+)</name>
        <dbReference type="ChEBI" id="CHEBI:29105"/>
        <note>catalytic</note>
    </ligand>
</feature>
<feature type="binding site" evidence="2">
    <location>
        <position position="191"/>
    </location>
    <ligand>
        <name>Zn(2+)</name>
        <dbReference type="ChEBI" id="CHEBI:29105"/>
        <note>catalytic</note>
    </ligand>
</feature>
<feature type="binding site" evidence="2">
    <location>
        <position position="197"/>
    </location>
    <ligand>
        <name>Zn(2+)</name>
        <dbReference type="ChEBI" id="CHEBI:29105"/>
        <note>catalytic</note>
    </ligand>
</feature>
<feature type="binding site" evidence="1">
    <location>
        <position position="266"/>
    </location>
    <ligand>
        <name>Ca(2+)</name>
        <dbReference type="ChEBI" id="CHEBI:29108"/>
        <label>1</label>
    </ligand>
</feature>
<feature type="binding site" evidence="1">
    <location>
        <position position="269"/>
    </location>
    <ligand>
        <name>Ca(2+)</name>
        <dbReference type="ChEBI" id="CHEBI:29108"/>
        <label>1</label>
    </ligand>
</feature>
<feature type="binding site" evidence="1">
    <location>
        <position position="298"/>
    </location>
    <ligand>
        <name>Ca(2+)</name>
        <dbReference type="ChEBI" id="CHEBI:29108"/>
        <label>1</label>
    </ligand>
</feature>
<feature type="binding site" evidence="1">
    <location>
        <position position="300"/>
    </location>
    <ligand>
        <name>Ca(2+)</name>
        <dbReference type="ChEBI" id="CHEBI:29108"/>
        <label>1</label>
    </ligand>
</feature>
<feature type="binding site" evidence="1">
    <location>
        <position position="301"/>
    </location>
    <ligand>
        <name>Ca(2+)</name>
        <dbReference type="ChEBI" id="CHEBI:29108"/>
        <label>2</label>
    </ligand>
</feature>
<feature type="binding site" evidence="1">
    <location>
        <position position="303"/>
    </location>
    <ligand>
        <name>Ca(2+)</name>
        <dbReference type="ChEBI" id="CHEBI:29108"/>
        <label>1</label>
    </ligand>
</feature>
<feature type="binding site" evidence="1">
    <location>
        <position position="303"/>
    </location>
    <ligand>
        <name>Ca(2+)</name>
        <dbReference type="ChEBI" id="CHEBI:29108"/>
        <label>2</label>
    </ligand>
</feature>
<feature type="binding site" evidence="1">
    <location>
        <position position="340"/>
    </location>
    <ligand>
        <name>Ca(2+)</name>
        <dbReference type="ChEBI" id="CHEBI:29108"/>
        <label>2</label>
    </ligand>
</feature>
<feature type="binding site" evidence="1">
    <location>
        <position position="342"/>
    </location>
    <ligand>
        <name>Ca(2+)</name>
        <dbReference type="ChEBI" id="CHEBI:29108"/>
        <label>2</label>
    </ligand>
</feature>
<comment type="catalytic activity">
    <reaction>
        <text>Preferential cleavage of bonds with hydrophobic residues in P1'.</text>
        <dbReference type="EC" id="3.4.24.40"/>
    </reaction>
</comment>
<comment type="cofactor">
    <cofactor evidence="1">
        <name>Zn(2+)</name>
        <dbReference type="ChEBI" id="CHEBI:29105"/>
    </cofactor>
    <text evidence="1">Binds 1 zinc ion per subunit.</text>
</comment>
<comment type="cofactor">
    <cofactor evidence="1">
        <name>Ca(2+)</name>
        <dbReference type="ChEBI" id="CHEBI:29108"/>
    </cofactor>
</comment>
<comment type="subcellular location">
    <subcellularLocation>
        <location evidence="1">Secreted</location>
    </subcellularLocation>
</comment>
<comment type="similarity">
    <text evidence="3">Belongs to the peptidase M10B family.</text>
</comment>
<sequence length="486" mass="53860">MEKYMSLKKKISYSEDKDVSGSEKANELLKWLQAYIPGKDSNIVVEHEPSKDAAKELIRGDYRWGHQDDDKSKAFQLKYTFLESKPDDMPWHISEFSAFNEKQKAAAKLSIQSWADVANINFVETTDAKEANITFGFFDVSLTGSYAFAYLPRPEKTQLGTWYNAKSRTFSNNDIDVNGYGRQTFTHEIGHTLGLQHPADYNASDEVSPTYKNSATYFEDSRAYTVMSYFSEKNTGQDFKGIYSSAPLLNDISAIQAVYGANNTIRADDTVYGFNSNTDRDFYTAKDENSKLLFTAWDTGGNDTFDFSGFTQDQRINLNEASFSDVGGLKGNVSIARGVTIENAIGGSGNDVLIGNDAANTLKGGAGDDIIYGGLGADNLWGGEGKDTFVYLSAKESPPLERDWIHDFVSGEDKIDVSLFDLGEAGKGGVRFVREFTGEVGEAVLRYNTVDKVNDFAINLGGEFSYDDFWVKIVGEPILESDFILS</sequence>
<organism>
    <name type="scientific">Photorhabdus luminescens</name>
    <name type="common">Xenorhabdus luminescens</name>
    <dbReference type="NCBI Taxonomy" id="29488"/>
    <lineage>
        <taxon>Bacteria</taxon>
        <taxon>Pseudomonadati</taxon>
        <taxon>Pseudomonadota</taxon>
        <taxon>Gammaproteobacteria</taxon>
        <taxon>Enterobacterales</taxon>
        <taxon>Morganellaceae</taxon>
        <taxon>Photorhabdus</taxon>
    </lineage>
</organism>
<protein>
    <recommendedName>
        <fullName>Serralysin</fullName>
        <ecNumber>3.4.24.40</ecNumber>
    </recommendedName>
    <alternativeName>
        <fullName>Secreted alkaline metalloproteinase</fullName>
    </alternativeName>
</protein>
<name>PRTA1_PHOLU</name>
<proteinExistence type="inferred from homology"/>
<reference key="1">
    <citation type="submission" date="2003-02" db="EMBL/GenBank/DDBJ databases">
        <authorList>
            <person name="Waterfield N."/>
        </authorList>
    </citation>
    <scope>NUCLEOTIDE SEQUENCE [GENOMIC DNA]</scope>
    <source>
        <strain>W14</strain>
    </source>
</reference>
<keyword id="KW-0106">Calcium</keyword>
<keyword id="KW-0378">Hydrolase</keyword>
<keyword id="KW-0479">Metal-binding</keyword>
<keyword id="KW-0482">Metalloprotease</keyword>
<keyword id="KW-0645">Protease</keyword>
<keyword id="KW-0677">Repeat</keyword>
<keyword id="KW-0964">Secreted</keyword>
<keyword id="KW-0862">Zinc</keyword>
<gene>
    <name type="primary">prtA1</name>
</gene>
<dbReference type="EC" id="3.4.24.40"/>
<dbReference type="EMBL" id="AY230750">
    <property type="protein sequence ID" value="AAO39138.1"/>
    <property type="molecule type" value="Genomic_DNA"/>
</dbReference>
<dbReference type="SMR" id="Q84F70"/>
<dbReference type="STRING" id="29488.KS18_15945"/>
<dbReference type="MEROPS" id="M10.063"/>
<dbReference type="GO" id="GO:0005615">
    <property type="term" value="C:extracellular space"/>
    <property type="evidence" value="ECO:0007669"/>
    <property type="project" value="InterPro"/>
</dbReference>
<dbReference type="GO" id="GO:0005509">
    <property type="term" value="F:calcium ion binding"/>
    <property type="evidence" value="ECO:0007669"/>
    <property type="project" value="InterPro"/>
</dbReference>
<dbReference type="GO" id="GO:0004222">
    <property type="term" value="F:metalloendopeptidase activity"/>
    <property type="evidence" value="ECO:0007669"/>
    <property type="project" value="InterPro"/>
</dbReference>
<dbReference type="GO" id="GO:0008270">
    <property type="term" value="F:zinc ion binding"/>
    <property type="evidence" value="ECO:0007669"/>
    <property type="project" value="InterPro"/>
</dbReference>
<dbReference type="GO" id="GO:0030574">
    <property type="term" value="P:collagen catabolic process"/>
    <property type="evidence" value="ECO:0007669"/>
    <property type="project" value="TreeGrafter"/>
</dbReference>
<dbReference type="GO" id="GO:0030198">
    <property type="term" value="P:extracellular matrix organization"/>
    <property type="evidence" value="ECO:0007669"/>
    <property type="project" value="TreeGrafter"/>
</dbReference>
<dbReference type="GO" id="GO:0006508">
    <property type="term" value="P:proteolysis"/>
    <property type="evidence" value="ECO:0007669"/>
    <property type="project" value="UniProtKB-KW"/>
</dbReference>
<dbReference type="CDD" id="cd04277">
    <property type="entry name" value="ZnMc_serralysin_like"/>
    <property type="match status" value="1"/>
</dbReference>
<dbReference type="Gene3D" id="3.40.390.10">
    <property type="entry name" value="Collagenase (Catalytic Domain)"/>
    <property type="match status" value="1"/>
</dbReference>
<dbReference type="Gene3D" id="2.150.10.10">
    <property type="entry name" value="Serralysin-like metalloprotease, C-terminal"/>
    <property type="match status" value="1"/>
</dbReference>
<dbReference type="InterPro" id="IPR018511">
    <property type="entry name" value="Hemolysin-typ_Ca-bd_CS"/>
</dbReference>
<dbReference type="InterPro" id="IPR001343">
    <property type="entry name" value="Hemolysn_Ca-bd"/>
</dbReference>
<dbReference type="InterPro" id="IPR024079">
    <property type="entry name" value="MetalloPept_cat_dom_sf"/>
</dbReference>
<dbReference type="InterPro" id="IPR016294">
    <property type="entry name" value="Pept_M10B"/>
</dbReference>
<dbReference type="InterPro" id="IPR013858">
    <property type="entry name" value="Peptidase_M10B_C"/>
</dbReference>
<dbReference type="InterPro" id="IPR006026">
    <property type="entry name" value="Peptidase_Metallo"/>
</dbReference>
<dbReference type="InterPro" id="IPR034033">
    <property type="entry name" value="Serralysin-like"/>
</dbReference>
<dbReference type="InterPro" id="IPR011049">
    <property type="entry name" value="Serralysin-like_metalloprot_C"/>
</dbReference>
<dbReference type="NCBIfam" id="NF035945">
    <property type="entry name" value="Zn_serralysin"/>
    <property type="match status" value="1"/>
</dbReference>
<dbReference type="PANTHER" id="PTHR10201">
    <property type="entry name" value="MATRIX METALLOPROTEINASE"/>
    <property type="match status" value="1"/>
</dbReference>
<dbReference type="PANTHER" id="PTHR10201:SF323">
    <property type="entry name" value="MATRIX METALLOPROTEINASE-21"/>
    <property type="match status" value="1"/>
</dbReference>
<dbReference type="Pfam" id="PF00353">
    <property type="entry name" value="HemolysinCabind"/>
    <property type="match status" value="1"/>
</dbReference>
<dbReference type="Pfam" id="PF08548">
    <property type="entry name" value="Peptidase_M10_C"/>
    <property type="match status" value="1"/>
</dbReference>
<dbReference type="Pfam" id="PF13688">
    <property type="entry name" value="Reprolysin_5"/>
    <property type="match status" value="1"/>
</dbReference>
<dbReference type="PIRSF" id="PIRSF001205">
    <property type="entry name" value="Peptidase_M10B"/>
    <property type="match status" value="1"/>
</dbReference>
<dbReference type="PRINTS" id="PR00313">
    <property type="entry name" value="CABNDNGRPT"/>
</dbReference>
<dbReference type="SMART" id="SM00235">
    <property type="entry name" value="ZnMc"/>
    <property type="match status" value="1"/>
</dbReference>
<dbReference type="SUPFAM" id="SSF51120">
    <property type="entry name" value="beta-Roll"/>
    <property type="match status" value="1"/>
</dbReference>
<dbReference type="SUPFAM" id="SSF55486">
    <property type="entry name" value="Metalloproteases ('zincins'), catalytic domain"/>
    <property type="match status" value="1"/>
</dbReference>
<dbReference type="PROSITE" id="PS00330">
    <property type="entry name" value="HEMOLYSIN_CALCIUM"/>
    <property type="match status" value="1"/>
</dbReference>
<dbReference type="PROSITE" id="PS00142">
    <property type="entry name" value="ZINC_PROTEASE"/>
    <property type="match status" value="1"/>
</dbReference>
<evidence type="ECO:0000250" key="1"/>
<evidence type="ECO:0000255" key="2">
    <source>
        <dbReference type="PROSITE-ProRule" id="PRU10095"/>
    </source>
</evidence>
<evidence type="ECO:0000305" key="3"/>